<gene>
    <name type="primary">ptr-3</name>
    <name type="synonym">pfa3</name>
    <name type="ORF">B13M13.170</name>
    <name type="ORF">NCU01267</name>
</gene>
<feature type="chain" id="PRO_0000212957" description="Palmitoyltransferase pfa3">
    <location>
        <begin position="1"/>
        <end position="622"/>
    </location>
</feature>
<feature type="topological domain" description="Cytoplasmic" evidence="2">
    <location>
        <begin position="1"/>
        <end position="38"/>
    </location>
</feature>
<feature type="transmembrane region" description="Helical" evidence="2">
    <location>
        <begin position="39"/>
        <end position="59"/>
    </location>
</feature>
<feature type="topological domain" description="Vacuolar" evidence="2">
    <location>
        <begin position="60"/>
        <end position="76"/>
    </location>
</feature>
<feature type="transmembrane region" description="Helical" evidence="2">
    <location>
        <begin position="77"/>
        <end position="97"/>
    </location>
</feature>
<feature type="topological domain" description="Cytoplasmic" evidence="2">
    <location>
        <begin position="98"/>
        <end position="175"/>
    </location>
</feature>
<feature type="transmembrane region" description="Helical" evidence="2">
    <location>
        <begin position="176"/>
        <end position="196"/>
    </location>
</feature>
<feature type="topological domain" description="Vacuolar" evidence="2">
    <location>
        <begin position="197"/>
        <end position="217"/>
    </location>
</feature>
<feature type="transmembrane region" description="Helical" evidence="2">
    <location>
        <begin position="218"/>
        <end position="238"/>
    </location>
</feature>
<feature type="topological domain" description="Cytoplasmic" evidence="2">
    <location>
        <begin position="239"/>
        <end position="622"/>
    </location>
</feature>
<feature type="domain" description="DHHC" evidence="3">
    <location>
        <begin position="132"/>
        <end position="182"/>
    </location>
</feature>
<feature type="region of interest" description="Disordered" evidence="4">
    <location>
        <begin position="298"/>
        <end position="334"/>
    </location>
</feature>
<feature type="region of interest" description="Disordered" evidence="4">
    <location>
        <begin position="419"/>
        <end position="507"/>
    </location>
</feature>
<feature type="region of interest" description="Disordered" evidence="4">
    <location>
        <begin position="533"/>
        <end position="622"/>
    </location>
</feature>
<feature type="compositionally biased region" description="Basic and acidic residues" evidence="4">
    <location>
        <begin position="302"/>
        <end position="311"/>
    </location>
</feature>
<feature type="compositionally biased region" description="Polar residues" evidence="4">
    <location>
        <begin position="313"/>
        <end position="330"/>
    </location>
</feature>
<feature type="compositionally biased region" description="Basic and acidic residues" evidence="4">
    <location>
        <begin position="419"/>
        <end position="428"/>
    </location>
</feature>
<feature type="compositionally biased region" description="Polar residues" evidence="4">
    <location>
        <begin position="443"/>
        <end position="455"/>
    </location>
</feature>
<feature type="compositionally biased region" description="Low complexity" evidence="4">
    <location>
        <begin position="466"/>
        <end position="488"/>
    </location>
</feature>
<feature type="compositionally biased region" description="Acidic residues" evidence="4">
    <location>
        <begin position="533"/>
        <end position="547"/>
    </location>
</feature>
<feature type="compositionally biased region" description="Basic and acidic residues" evidence="4">
    <location>
        <begin position="610"/>
        <end position="622"/>
    </location>
</feature>
<comment type="function">
    <text evidence="1">Palmitoyltransferase specific for vac8. Palmitoylates vac8 at one or more of its N-terminal cysteine residues, which is required for its proper membrane localization (By similarity).</text>
</comment>
<comment type="catalytic activity">
    <reaction>
        <text>L-cysteinyl-[protein] + hexadecanoyl-CoA = S-hexadecanoyl-L-cysteinyl-[protein] + CoA</text>
        <dbReference type="Rhea" id="RHEA:36683"/>
        <dbReference type="Rhea" id="RHEA-COMP:10131"/>
        <dbReference type="Rhea" id="RHEA-COMP:11032"/>
        <dbReference type="ChEBI" id="CHEBI:29950"/>
        <dbReference type="ChEBI" id="CHEBI:57287"/>
        <dbReference type="ChEBI" id="CHEBI:57379"/>
        <dbReference type="ChEBI" id="CHEBI:74151"/>
        <dbReference type="EC" id="2.3.1.225"/>
    </reaction>
</comment>
<comment type="subcellular location">
    <subcellularLocation>
        <location evidence="1">Vacuole membrane</location>
        <topology evidence="1">Multi-pass membrane protein</topology>
    </subcellularLocation>
</comment>
<comment type="domain">
    <text evidence="1">The DHHC domain is required for palmitoyltransferase activity.</text>
</comment>
<comment type="PTM">
    <text evidence="1">Autopalmitoylated.</text>
</comment>
<comment type="similarity">
    <text evidence="5">Belongs to the DHHC palmitoyltransferase family. PFA3 subfamily.</text>
</comment>
<comment type="sequence caution" evidence="5">
    <conflict type="erroneous gene model prediction">
        <sequence resource="EMBL-CDS" id="CAE76126"/>
    </conflict>
</comment>
<organism>
    <name type="scientific">Neurospora crassa (strain ATCC 24698 / 74-OR23-1A / CBS 708.71 / DSM 1257 / FGSC 987)</name>
    <dbReference type="NCBI Taxonomy" id="367110"/>
    <lineage>
        <taxon>Eukaryota</taxon>
        <taxon>Fungi</taxon>
        <taxon>Dikarya</taxon>
        <taxon>Ascomycota</taxon>
        <taxon>Pezizomycotina</taxon>
        <taxon>Sordariomycetes</taxon>
        <taxon>Sordariomycetidae</taxon>
        <taxon>Sordariales</taxon>
        <taxon>Sordariaceae</taxon>
        <taxon>Neurospora</taxon>
    </lineage>
</organism>
<proteinExistence type="inferred from homology"/>
<accession>Q7S7C5</accession>
<evidence type="ECO:0000250" key="1"/>
<evidence type="ECO:0000255" key="2"/>
<evidence type="ECO:0000255" key="3">
    <source>
        <dbReference type="PROSITE-ProRule" id="PRU00067"/>
    </source>
</evidence>
<evidence type="ECO:0000256" key="4">
    <source>
        <dbReference type="SAM" id="MobiDB-lite"/>
    </source>
</evidence>
<evidence type="ECO:0000305" key="5"/>
<name>PFA3_NEUCR</name>
<dbReference type="EC" id="2.3.1.225"/>
<dbReference type="EMBL" id="BX842618">
    <property type="protein sequence ID" value="CAE76126.1"/>
    <property type="status" value="ALT_SEQ"/>
    <property type="molecule type" value="Genomic_DNA"/>
</dbReference>
<dbReference type="EMBL" id="CM002240">
    <property type="protein sequence ID" value="EAA31509.3"/>
    <property type="molecule type" value="Genomic_DNA"/>
</dbReference>
<dbReference type="RefSeq" id="XP_960745.3">
    <property type="nucleotide sequence ID" value="XM_955652.3"/>
</dbReference>
<dbReference type="SMR" id="Q7S7C5"/>
<dbReference type="STRING" id="367110.Q7S7C5"/>
<dbReference type="PaxDb" id="5141-EFNCRP00000004011"/>
<dbReference type="EnsemblFungi" id="EAA31509">
    <property type="protein sequence ID" value="EAA31509"/>
    <property type="gene ID" value="NCU01267"/>
</dbReference>
<dbReference type="GeneID" id="3876895"/>
<dbReference type="KEGG" id="ncr:NCU01267"/>
<dbReference type="VEuPathDB" id="FungiDB:NCU01267"/>
<dbReference type="HOGENOM" id="CLU_024136_0_1_1"/>
<dbReference type="InParanoid" id="Q7S7C5"/>
<dbReference type="OrthoDB" id="302728at2759"/>
<dbReference type="Proteomes" id="UP000001805">
    <property type="component" value="Chromosome 2, Linkage Group V"/>
</dbReference>
<dbReference type="GO" id="GO:0005783">
    <property type="term" value="C:endoplasmic reticulum"/>
    <property type="evidence" value="ECO:0000318"/>
    <property type="project" value="GO_Central"/>
</dbReference>
<dbReference type="GO" id="GO:0005794">
    <property type="term" value="C:Golgi apparatus"/>
    <property type="evidence" value="ECO:0000318"/>
    <property type="project" value="GO_Central"/>
</dbReference>
<dbReference type="GO" id="GO:0005774">
    <property type="term" value="C:vacuolar membrane"/>
    <property type="evidence" value="ECO:0007669"/>
    <property type="project" value="UniProtKB-SubCell"/>
</dbReference>
<dbReference type="GO" id="GO:0019706">
    <property type="term" value="F:protein-cysteine S-palmitoyltransferase activity"/>
    <property type="evidence" value="ECO:0000318"/>
    <property type="project" value="GO_Central"/>
</dbReference>
<dbReference type="GO" id="GO:0006612">
    <property type="term" value="P:protein targeting to membrane"/>
    <property type="evidence" value="ECO:0000318"/>
    <property type="project" value="GO_Central"/>
</dbReference>
<dbReference type="InterPro" id="IPR001594">
    <property type="entry name" value="Palmitoyltrfase_DHHC"/>
</dbReference>
<dbReference type="InterPro" id="IPR039859">
    <property type="entry name" value="PFA4/ZDH16/20/ERF2-like"/>
</dbReference>
<dbReference type="PANTHER" id="PTHR12246">
    <property type="entry name" value="PALMITOYLTRANSFERASE ZDHHC16"/>
    <property type="match status" value="1"/>
</dbReference>
<dbReference type="Pfam" id="PF01529">
    <property type="entry name" value="DHHC"/>
    <property type="match status" value="1"/>
</dbReference>
<dbReference type="PROSITE" id="PS50216">
    <property type="entry name" value="DHHC"/>
    <property type="match status" value="1"/>
</dbReference>
<protein>
    <recommendedName>
        <fullName>Palmitoyltransferase pfa3</fullName>
        <ecNumber>2.3.1.225</ecNumber>
    </recommendedName>
    <alternativeName>
        <fullName>Palmitoyltransferase 3</fullName>
    </alternativeName>
    <alternativeName>
        <fullName>Protein fatty acyltransferase 3</fullName>
    </alternativeName>
</protein>
<sequence>MDATPYTTSSTSTALDSPSSLSATMARRWARKLERYCCTCVTYFPLAFVYSMTSWAAYVDVSLSTTPSRVTWLGHSYGFIAVVLYLLANWCYTYAVFTSPGSTTNEYGYSTLPTQAPPTATSFTVKSNGEFRFCKKCQARKPDRAHHCSTCRRCVLKMDHHCPWLATCVGLRNHKAFLLFLIYTSVFCWVSFAGSASWVWEEIMSNTTYVETLMPVNYIMLSVISGIIGIVLSAFCGWHIYLASRGQTTIECLEKTRYLSPLRESMQRTYVNQHTPGQGIALPKYGQQLLDIHQNTIPGVTRPEEGEEMRRMTTPSGSSQRNDLASQHNPELQAGSRRFTYDEMEHIRARKRYEDYLDEQDSTKLPHAFDLGTPRNLLHLFGTNAWLWPFPVCTTIGDGWSWEPNPKWIEARDRIAREREEQRQRERQAGWGPADDDDITPVYTPTWTPPNQQHPQGGAGRHYLQPSSQPQTQRNSNSSSPSFTPSRRTPSKADRILGRDPNMYADDEPVIYGKHDVAMSRLSPAGRTLVVEDDVLNDDDDDDEDYFQDAGRKQEDAEQSALNVVTNGRWGRPAGASGVGLLAHGRPGGARSPISPISPPARGFGGSAKNGEEGRSNDDGVD</sequence>
<keyword id="KW-0012">Acyltransferase</keyword>
<keyword id="KW-0449">Lipoprotein</keyword>
<keyword id="KW-0472">Membrane</keyword>
<keyword id="KW-0564">Palmitate</keyword>
<keyword id="KW-1185">Reference proteome</keyword>
<keyword id="KW-0808">Transferase</keyword>
<keyword id="KW-0812">Transmembrane</keyword>
<keyword id="KW-1133">Transmembrane helix</keyword>
<keyword id="KW-0926">Vacuole</keyword>
<reference key="1">
    <citation type="journal article" date="2003" name="Nucleic Acids Res.">
        <title>What's in the genome of a filamentous fungus? Analysis of the Neurospora genome sequence.</title>
        <authorList>
            <person name="Mannhaupt G."/>
            <person name="Montrone C."/>
            <person name="Haase D."/>
            <person name="Mewes H.-W."/>
            <person name="Aign V."/>
            <person name="Hoheisel J.D."/>
            <person name="Fartmann B."/>
            <person name="Nyakatura G."/>
            <person name="Kempken F."/>
            <person name="Maier J."/>
            <person name="Schulte U."/>
        </authorList>
    </citation>
    <scope>NUCLEOTIDE SEQUENCE [LARGE SCALE GENOMIC DNA]</scope>
    <source>
        <strain>ATCC 24698 / 74-OR23-1A / CBS 708.71 / DSM 1257 / FGSC 987</strain>
    </source>
</reference>
<reference key="2">
    <citation type="journal article" date="2003" name="Nature">
        <title>The genome sequence of the filamentous fungus Neurospora crassa.</title>
        <authorList>
            <person name="Galagan J.E."/>
            <person name="Calvo S.E."/>
            <person name="Borkovich K.A."/>
            <person name="Selker E.U."/>
            <person name="Read N.D."/>
            <person name="Jaffe D.B."/>
            <person name="FitzHugh W."/>
            <person name="Ma L.-J."/>
            <person name="Smirnov S."/>
            <person name="Purcell S."/>
            <person name="Rehman B."/>
            <person name="Elkins T."/>
            <person name="Engels R."/>
            <person name="Wang S."/>
            <person name="Nielsen C.B."/>
            <person name="Butler J."/>
            <person name="Endrizzi M."/>
            <person name="Qui D."/>
            <person name="Ianakiev P."/>
            <person name="Bell-Pedersen D."/>
            <person name="Nelson M.A."/>
            <person name="Werner-Washburne M."/>
            <person name="Selitrennikoff C.P."/>
            <person name="Kinsey J.A."/>
            <person name="Braun E.L."/>
            <person name="Zelter A."/>
            <person name="Schulte U."/>
            <person name="Kothe G.O."/>
            <person name="Jedd G."/>
            <person name="Mewes H.-W."/>
            <person name="Staben C."/>
            <person name="Marcotte E."/>
            <person name="Greenberg D."/>
            <person name="Roy A."/>
            <person name="Foley K."/>
            <person name="Naylor J."/>
            <person name="Stange-Thomann N."/>
            <person name="Barrett R."/>
            <person name="Gnerre S."/>
            <person name="Kamal M."/>
            <person name="Kamvysselis M."/>
            <person name="Mauceli E.W."/>
            <person name="Bielke C."/>
            <person name="Rudd S."/>
            <person name="Frishman D."/>
            <person name="Krystofova S."/>
            <person name="Rasmussen C."/>
            <person name="Metzenberg R.L."/>
            <person name="Perkins D.D."/>
            <person name="Kroken S."/>
            <person name="Cogoni C."/>
            <person name="Macino G."/>
            <person name="Catcheside D.E.A."/>
            <person name="Li W."/>
            <person name="Pratt R.J."/>
            <person name="Osmani S.A."/>
            <person name="DeSouza C.P.C."/>
            <person name="Glass N.L."/>
            <person name="Orbach M.J."/>
            <person name="Berglund J.A."/>
            <person name="Voelker R."/>
            <person name="Yarden O."/>
            <person name="Plamann M."/>
            <person name="Seiler S."/>
            <person name="Dunlap J.C."/>
            <person name="Radford A."/>
            <person name="Aramayo R."/>
            <person name="Natvig D.O."/>
            <person name="Alex L.A."/>
            <person name="Mannhaupt G."/>
            <person name="Ebbole D.J."/>
            <person name="Freitag M."/>
            <person name="Paulsen I."/>
            <person name="Sachs M.S."/>
            <person name="Lander E.S."/>
            <person name="Nusbaum C."/>
            <person name="Birren B.W."/>
        </authorList>
    </citation>
    <scope>NUCLEOTIDE SEQUENCE [LARGE SCALE GENOMIC DNA]</scope>
    <source>
        <strain>ATCC 24698 / 74-OR23-1A / CBS 708.71 / DSM 1257 / FGSC 987</strain>
    </source>
</reference>